<evidence type="ECO:0000250" key="1"/>
<evidence type="ECO:0000255" key="2"/>
<evidence type="ECO:0000305" key="3"/>
<dbReference type="EC" id="3.1.1.-"/>
<dbReference type="EMBL" id="BA000033">
    <property type="protein sequence ID" value="BAB96473.1"/>
    <property type="molecule type" value="Genomic_DNA"/>
</dbReference>
<dbReference type="SMR" id="Q8NUH4"/>
<dbReference type="KEGG" id="sam:MW2608"/>
<dbReference type="HOGENOM" id="CLU_036110_2_0_9"/>
<dbReference type="GO" id="GO:0005737">
    <property type="term" value="C:cytoplasm"/>
    <property type="evidence" value="ECO:0007669"/>
    <property type="project" value="UniProtKB-SubCell"/>
</dbReference>
<dbReference type="GO" id="GO:0016787">
    <property type="term" value="F:hydrolase activity"/>
    <property type="evidence" value="ECO:0007669"/>
    <property type="project" value="UniProtKB-KW"/>
</dbReference>
<dbReference type="GO" id="GO:0046872">
    <property type="term" value="F:metal ion binding"/>
    <property type="evidence" value="ECO:0007669"/>
    <property type="project" value="UniProtKB-KW"/>
</dbReference>
<dbReference type="Gene3D" id="2.120.10.30">
    <property type="entry name" value="TolB, C-terminal domain"/>
    <property type="match status" value="1"/>
</dbReference>
<dbReference type="InterPro" id="IPR011042">
    <property type="entry name" value="6-blade_b-propeller_TolB-like"/>
</dbReference>
<dbReference type="InterPro" id="IPR013658">
    <property type="entry name" value="SGL"/>
</dbReference>
<dbReference type="InterPro" id="IPR051262">
    <property type="entry name" value="SMP-30/CGR1_Lactonase"/>
</dbReference>
<dbReference type="PANTHER" id="PTHR47572:SF4">
    <property type="entry name" value="LACTONASE DRP35"/>
    <property type="match status" value="1"/>
</dbReference>
<dbReference type="PANTHER" id="PTHR47572">
    <property type="entry name" value="LIPOPROTEIN-RELATED"/>
    <property type="match status" value="1"/>
</dbReference>
<dbReference type="Pfam" id="PF08450">
    <property type="entry name" value="SGL"/>
    <property type="match status" value="1"/>
</dbReference>
<dbReference type="SUPFAM" id="SSF63829">
    <property type="entry name" value="Calcium-dependent phosphotriesterase"/>
    <property type="match status" value="1"/>
</dbReference>
<reference key="1">
    <citation type="journal article" date="2002" name="Lancet">
        <title>Genome and virulence determinants of high virulence community-acquired MRSA.</title>
        <authorList>
            <person name="Baba T."/>
            <person name="Takeuchi F."/>
            <person name="Kuroda M."/>
            <person name="Yuzawa H."/>
            <person name="Aoki K."/>
            <person name="Oguchi A."/>
            <person name="Nagai Y."/>
            <person name="Iwama N."/>
            <person name="Asano K."/>
            <person name="Naimi T."/>
            <person name="Kuroda H."/>
            <person name="Cui L."/>
            <person name="Yamamoto K."/>
            <person name="Hiramatsu K."/>
        </authorList>
    </citation>
    <scope>NUCLEOTIDE SEQUENCE [LARGE SCALE GENOMIC DNA]</scope>
    <source>
        <strain>MW2</strain>
    </source>
</reference>
<sequence length="324" mass="36097">MMSQQDLPTLFYSGKSNSAVPIISESELQTITAEPWLEISKKGLQLEGLNFDRQGQLFLLDVFEGNIFKINPETKEIKRPFVSHKANPAAIKIHKDGRLFVCYLGDFKSTGGIFAATENGDNIQDIIEDFSTTYCIDDMVFDSKGGFYFTDFRGYSTNPLGGVYYVAPDFRTVTPIIQNISVANGIALSKDEKVLWVTETTANRLHRIALEDDGVTIQPFGATIPYYFTGHEGPDSCCIDSDDNLYVAMYGQGRVLVFNKRGYPIGQILIPGRDEGHMLRSTHPQFIPDTNQLIICSNDIEMGGGSMLYTVNGFAKGHQSFQFQ</sequence>
<proteinExistence type="inferred from homology"/>
<gene>
    <name type="primary">drp35</name>
    <name type="ordered locus">MW2608</name>
</gene>
<keyword id="KW-0106">Calcium</keyword>
<keyword id="KW-0963">Cytoplasm</keyword>
<keyword id="KW-0378">Hydrolase</keyword>
<keyword id="KW-0479">Metal-binding</keyword>
<name>DRP35_STAAW</name>
<comment type="function">
    <text evidence="1">Exhibits lactonase activity. Acts in cells with perturbed membrane integrity and is possibly related to the membrane homeostasis (By similarity).</text>
</comment>
<comment type="cofactor">
    <cofactor evidence="1">
        <name>Ca(2+)</name>
        <dbReference type="ChEBI" id="CHEBI:29108"/>
    </cofactor>
    <text evidence="1">Binds 2 Ca(2+) ions per subunit.</text>
</comment>
<comment type="subcellular location">
    <subcellularLocation>
        <location evidence="1">Cytoplasm</location>
    </subcellularLocation>
</comment>
<comment type="similarity">
    <text evidence="3">Belongs to the SMP-30/CGR1 family.</text>
</comment>
<feature type="chain" id="PRO_0000259750" description="Lactonase drp35">
    <location>
        <begin position="1"/>
        <end position="324"/>
    </location>
</feature>
<feature type="active site" description="Proton donor" evidence="2">
    <location>
        <position position="235"/>
    </location>
</feature>
<feature type="binding site" evidence="1">
    <location>
        <position position="47"/>
    </location>
    <ligand>
        <name>Ca(2+)</name>
        <dbReference type="ChEBI" id="CHEBI:29108"/>
        <label>1</label>
        <note>catalytic</note>
    </ligand>
</feature>
<feature type="binding site" evidence="1">
    <location>
        <position position="109"/>
    </location>
    <ligand>
        <name>Ca(2+)</name>
        <dbReference type="ChEBI" id="CHEBI:29108"/>
        <label>2</label>
    </ligand>
</feature>
<feature type="binding site" evidence="1">
    <location>
        <position position="111"/>
    </location>
    <ligand>
        <name>Ca(2+)</name>
        <dbReference type="ChEBI" id="CHEBI:29108"/>
        <label>2</label>
    </ligand>
</feature>
<feature type="binding site" evidence="1">
    <location>
        <position position="129"/>
    </location>
    <ligand>
        <name>Ca(2+)</name>
        <dbReference type="ChEBI" id="CHEBI:29108"/>
        <label>2</label>
    </ligand>
</feature>
<feature type="binding site" evidence="1">
    <location>
        <position position="132"/>
    </location>
    <ligand>
        <name>Ca(2+)</name>
        <dbReference type="ChEBI" id="CHEBI:29108"/>
        <label>2</label>
    </ligand>
</feature>
<feature type="binding site" evidence="1">
    <location>
        <position position="134"/>
    </location>
    <ligand>
        <name>Ca(2+)</name>
        <dbReference type="ChEBI" id="CHEBI:29108"/>
        <label>2</label>
    </ligand>
</feature>
<feature type="binding site" evidence="1">
    <location>
        <position position="137"/>
    </location>
    <ligand>
        <name>Ca(2+)</name>
        <dbReference type="ChEBI" id="CHEBI:29108"/>
        <label>1</label>
        <note>catalytic</note>
    </ligand>
</feature>
<feature type="binding site" evidence="1">
    <location>
        <position position="184"/>
    </location>
    <ligand>
        <name>Ca(2+)</name>
        <dbReference type="ChEBI" id="CHEBI:29108"/>
        <label>1</label>
        <note>catalytic</note>
    </ligand>
</feature>
<feature type="binding site" evidence="1">
    <location>
        <position position="235"/>
    </location>
    <ligand>
        <name>Ca(2+)</name>
        <dbReference type="ChEBI" id="CHEBI:29108"/>
        <label>1</label>
        <note>catalytic</note>
    </ligand>
</feature>
<feature type="binding site" evidence="1">
    <location>
        <position position="236"/>
    </location>
    <ligand>
        <name>Ca(2+)</name>
        <dbReference type="ChEBI" id="CHEBI:29108"/>
        <label>1</label>
        <note>catalytic</note>
    </ligand>
</feature>
<accession>Q8NUH4</accession>
<protein>
    <recommendedName>
        <fullName>Lactonase drp35</fullName>
        <ecNumber>3.1.1.-</ecNumber>
    </recommendedName>
</protein>
<organism>
    <name type="scientific">Staphylococcus aureus (strain MW2)</name>
    <dbReference type="NCBI Taxonomy" id="196620"/>
    <lineage>
        <taxon>Bacteria</taxon>
        <taxon>Bacillati</taxon>
        <taxon>Bacillota</taxon>
        <taxon>Bacilli</taxon>
        <taxon>Bacillales</taxon>
        <taxon>Staphylococcaceae</taxon>
        <taxon>Staphylococcus</taxon>
    </lineage>
</organism>